<dbReference type="EMBL" id="M37308">
    <property type="protein sequence ID" value="AAA26454.1"/>
    <property type="molecule type" value="Genomic_DNA"/>
</dbReference>
<dbReference type="EMBL" id="X12757">
    <property type="protein sequence ID" value="CAA31245.1"/>
    <property type="molecule type" value="Genomic_DNA"/>
</dbReference>
<dbReference type="PIR" id="S01146">
    <property type="entry name" value="S01146"/>
</dbReference>
<dbReference type="RefSeq" id="WP_011390995.1">
    <property type="nucleotide sequence ID" value="NZ_DAMDTZ010000099.1"/>
</dbReference>
<dbReference type="OMA" id="IGMRISI"/>
<dbReference type="GO" id="GO:0005886">
    <property type="term" value="C:plasma membrane"/>
    <property type="evidence" value="ECO:0007669"/>
    <property type="project" value="UniProtKB-SubCell"/>
</dbReference>
<dbReference type="GO" id="GO:0045259">
    <property type="term" value="C:proton-transporting ATP synthase complex"/>
    <property type="evidence" value="ECO:0007669"/>
    <property type="project" value="UniProtKB-KW"/>
</dbReference>
<dbReference type="GO" id="GO:1902600">
    <property type="term" value="P:proton transmembrane transport"/>
    <property type="evidence" value="ECO:0007669"/>
    <property type="project" value="UniProtKB-KW"/>
</dbReference>
<dbReference type="InterPro" id="IPR016989">
    <property type="entry name" value="Atp1_alphaprobac"/>
</dbReference>
<dbReference type="InterPro" id="IPR032820">
    <property type="entry name" value="ATPase_put"/>
</dbReference>
<dbReference type="Pfam" id="PF09527">
    <property type="entry name" value="ATPase_gene1"/>
    <property type="match status" value="1"/>
</dbReference>
<dbReference type="PIRSF" id="PIRSF032126">
    <property type="entry name" value="F0F1_ATP_synthase_subunit_I"/>
    <property type="match status" value="1"/>
</dbReference>
<proteinExistence type="inferred from homology"/>
<evidence type="ECO:0000255" key="1"/>
<evidence type="ECO:0000256" key="2">
    <source>
        <dbReference type="SAM" id="MobiDB-lite"/>
    </source>
</evidence>
<evidence type="ECO:0000305" key="3"/>
<organism>
    <name type="scientific">Rhodospirillum rubrum</name>
    <dbReference type="NCBI Taxonomy" id="1085"/>
    <lineage>
        <taxon>Bacteria</taxon>
        <taxon>Pseudomonadati</taxon>
        <taxon>Pseudomonadota</taxon>
        <taxon>Alphaproteobacteria</taxon>
        <taxon>Rhodospirillales</taxon>
        <taxon>Rhodospirillaceae</taxon>
        <taxon>Rhodospirillum</taxon>
    </lineage>
</organism>
<accession>P15011</accession>
<sequence>MTDRDTPPSLEDISRRLTEAKGGADGAEADGAGSSGPARASGLGIGMRISIELVTTIAVGGAIGYGLDSWLGTSPLAMVVFLVLGGAAGVMNAYRVVKGLDDSVGLGRAIERKEKAEGNKDRA</sequence>
<reference key="1">
    <citation type="journal article" date="1988" name="Biochem. J.">
        <title>DNA sequence of a gene cluster coding for subunits of the F0 membrane sector of ATP synthase in Rhodospirillum rubrum. Support for modular evolution of the F1 and F0 sectors.</title>
        <authorList>
            <person name="Falk G."/>
            <person name="Walker J.E."/>
        </authorList>
    </citation>
    <scope>NUCLEOTIDE SEQUENCE [GENOMIC DNA]</scope>
</reference>
<comment type="function">
    <text>A possible function for this protein is to guide the assembly of the membrane sector of the ATPase enzyme complex.</text>
</comment>
<comment type="subcellular location">
    <subcellularLocation>
        <location evidence="3">Cell membrane</location>
        <topology evidence="3">Multi-pass membrane protein</topology>
    </subcellularLocation>
</comment>
<comment type="similarity">
    <text evidence="3">Belongs to the bacterial AtpI family.</text>
</comment>
<name>ATPZ_RHORU</name>
<gene>
    <name type="primary">atpI</name>
</gene>
<keyword id="KW-1003">Cell membrane</keyword>
<keyword id="KW-0138">CF(0)</keyword>
<keyword id="KW-0375">Hydrogen ion transport</keyword>
<keyword id="KW-0406">Ion transport</keyword>
<keyword id="KW-0472">Membrane</keyword>
<keyword id="KW-0812">Transmembrane</keyword>
<keyword id="KW-1133">Transmembrane helix</keyword>
<keyword id="KW-0813">Transport</keyword>
<protein>
    <recommendedName>
        <fullName>ATP synthase protein I</fullName>
    </recommendedName>
</protein>
<feature type="chain" id="PRO_0000071712" description="ATP synthase protein I">
    <location>
        <begin position="1"/>
        <end position="123"/>
    </location>
</feature>
<feature type="transmembrane region" description="Helical" evidence="1">
    <location>
        <begin position="43"/>
        <end position="63"/>
    </location>
</feature>
<feature type="transmembrane region" description="Helical" evidence="1">
    <location>
        <begin position="70"/>
        <end position="90"/>
    </location>
</feature>
<feature type="region of interest" description="Disordered" evidence="2">
    <location>
        <begin position="1"/>
        <end position="38"/>
    </location>
</feature>
<feature type="compositionally biased region" description="Basic and acidic residues" evidence="2">
    <location>
        <begin position="1"/>
        <end position="19"/>
    </location>
</feature>
<feature type="compositionally biased region" description="Low complexity" evidence="2">
    <location>
        <begin position="29"/>
        <end position="38"/>
    </location>
</feature>